<protein>
    <recommendedName>
        <fullName evidence="1">Probable Fe(2+)-trafficking protein</fullName>
    </recommendedName>
</protein>
<sequence length="91" mass="10709">MTRMVFCQRLKKEAPGMAFQLVPGELGKRIFDNICQEAWAEWQKKQTMLINEKKLNMMNAEHRALLQTEMEKYLFEDGDVQIEGYVPPSEK</sequence>
<organism>
    <name type="scientific">Tolumonas auensis (strain DSM 9187 / NBRC 110442 / TA 4)</name>
    <dbReference type="NCBI Taxonomy" id="595494"/>
    <lineage>
        <taxon>Bacteria</taxon>
        <taxon>Pseudomonadati</taxon>
        <taxon>Pseudomonadota</taxon>
        <taxon>Gammaproteobacteria</taxon>
        <taxon>Aeromonadales</taxon>
        <taxon>Aeromonadaceae</taxon>
        <taxon>Tolumonas</taxon>
    </lineage>
</organism>
<accession>C4LCM1</accession>
<reference key="1">
    <citation type="submission" date="2009-05" db="EMBL/GenBank/DDBJ databases">
        <title>Complete sequence of Tolumonas auensis DSM 9187.</title>
        <authorList>
            <consortium name="US DOE Joint Genome Institute"/>
            <person name="Lucas S."/>
            <person name="Copeland A."/>
            <person name="Lapidus A."/>
            <person name="Glavina del Rio T."/>
            <person name="Tice H."/>
            <person name="Bruce D."/>
            <person name="Goodwin L."/>
            <person name="Pitluck S."/>
            <person name="Chertkov O."/>
            <person name="Brettin T."/>
            <person name="Detter J.C."/>
            <person name="Han C."/>
            <person name="Larimer F."/>
            <person name="Land M."/>
            <person name="Hauser L."/>
            <person name="Kyrpides N."/>
            <person name="Mikhailova N."/>
            <person name="Spring S."/>
            <person name="Beller H."/>
        </authorList>
    </citation>
    <scope>NUCLEOTIDE SEQUENCE [LARGE SCALE GENOMIC DNA]</scope>
    <source>
        <strain>DSM 9187 / NBRC 110442 / TA 4</strain>
    </source>
</reference>
<comment type="function">
    <text evidence="1">Could be a mediator in iron transactions between iron acquisition and iron-requiring processes, such as synthesis and/or repair of Fe-S clusters in biosynthetic enzymes.</text>
</comment>
<comment type="similarity">
    <text evidence="1">Belongs to the Fe(2+)-trafficking protein family.</text>
</comment>
<keyword id="KW-0408">Iron</keyword>
<keyword id="KW-1185">Reference proteome</keyword>
<feature type="chain" id="PRO_1000212558" description="Probable Fe(2+)-trafficking protein">
    <location>
        <begin position="1"/>
        <end position="91"/>
    </location>
</feature>
<evidence type="ECO:0000255" key="1">
    <source>
        <dbReference type="HAMAP-Rule" id="MF_00686"/>
    </source>
</evidence>
<gene>
    <name type="ordered locus">Tola_0957</name>
</gene>
<dbReference type="EMBL" id="CP001616">
    <property type="protein sequence ID" value="ACQ92585.1"/>
    <property type="molecule type" value="Genomic_DNA"/>
</dbReference>
<dbReference type="RefSeq" id="WP_012729184.1">
    <property type="nucleotide sequence ID" value="NC_012691.1"/>
</dbReference>
<dbReference type="SMR" id="C4LCM1"/>
<dbReference type="STRING" id="595494.Tola_0957"/>
<dbReference type="KEGG" id="tau:Tola_0957"/>
<dbReference type="eggNOG" id="COG2924">
    <property type="taxonomic scope" value="Bacteria"/>
</dbReference>
<dbReference type="HOGENOM" id="CLU_170994_0_0_6"/>
<dbReference type="OrthoDB" id="9804318at2"/>
<dbReference type="Proteomes" id="UP000009073">
    <property type="component" value="Chromosome"/>
</dbReference>
<dbReference type="GO" id="GO:0005829">
    <property type="term" value="C:cytosol"/>
    <property type="evidence" value="ECO:0007669"/>
    <property type="project" value="TreeGrafter"/>
</dbReference>
<dbReference type="GO" id="GO:0005506">
    <property type="term" value="F:iron ion binding"/>
    <property type="evidence" value="ECO:0007669"/>
    <property type="project" value="UniProtKB-UniRule"/>
</dbReference>
<dbReference type="GO" id="GO:0034599">
    <property type="term" value="P:cellular response to oxidative stress"/>
    <property type="evidence" value="ECO:0007669"/>
    <property type="project" value="TreeGrafter"/>
</dbReference>
<dbReference type="FunFam" id="1.10.3880.10:FF:000001">
    <property type="entry name" value="Probable Fe(2+)-trafficking protein"/>
    <property type="match status" value="1"/>
</dbReference>
<dbReference type="Gene3D" id="1.10.3880.10">
    <property type="entry name" value="Fe(II) trafficking protein YggX"/>
    <property type="match status" value="1"/>
</dbReference>
<dbReference type="HAMAP" id="MF_00686">
    <property type="entry name" value="Fe_traffic_YggX"/>
    <property type="match status" value="1"/>
</dbReference>
<dbReference type="InterPro" id="IPR007457">
    <property type="entry name" value="Fe_traffick_prot_YggX"/>
</dbReference>
<dbReference type="InterPro" id="IPR036766">
    <property type="entry name" value="Fe_traffick_prot_YggX_sf"/>
</dbReference>
<dbReference type="NCBIfam" id="NF003817">
    <property type="entry name" value="PRK05408.1"/>
    <property type="match status" value="1"/>
</dbReference>
<dbReference type="PANTHER" id="PTHR36965">
    <property type="entry name" value="FE(2+)-TRAFFICKING PROTEIN-RELATED"/>
    <property type="match status" value="1"/>
</dbReference>
<dbReference type="PANTHER" id="PTHR36965:SF1">
    <property type="entry name" value="FE(2+)-TRAFFICKING PROTEIN-RELATED"/>
    <property type="match status" value="1"/>
</dbReference>
<dbReference type="Pfam" id="PF04362">
    <property type="entry name" value="Iron_traffic"/>
    <property type="match status" value="1"/>
</dbReference>
<dbReference type="PIRSF" id="PIRSF029827">
    <property type="entry name" value="Fe_traffic_YggX"/>
    <property type="match status" value="1"/>
</dbReference>
<dbReference type="SUPFAM" id="SSF111148">
    <property type="entry name" value="YggX-like"/>
    <property type="match status" value="1"/>
</dbReference>
<name>FETP_TOLAT</name>
<proteinExistence type="inferred from homology"/>